<organism>
    <name type="scientific">Aliivibrio fischeri (strain ATCC 700601 / ES114)</name>
    <name type="common">Vibrio fischeri</name>
    <dbReference type="NCBI Taxonomy" id="312309"/>
    <lineage>
        <taxon>Bacteria</taxon>
        <taxon>Pseudomonadati</taxon>
        <taxon>Pseudomonadota</taxon>
        <taxon>Gammaproteobacteria</taxon>
        <taxon>Vibrionales</taxon>
        <taxon>Vibrionaceae</taxon>
        <taxon>Aliivibrio</taxon>
    </lineage>
</organism>
<proteinExistence type="inferred from homology"/>
<accession>Q5E8P5</accession>
<evidence type="ECO:0000255" key="1">
    <source>
        <dbReference type="HAMAP-Rule" id="MF_00328"/>
    </source>
</evidence>
<feature type="chain" id="PRO_0000266433" description="Guanylate kinase">
    <location>
        <begin position="1"/>
        <end position="207"/>
    </location>
</feature>
<feature type="domain" description="Guanylate kinase-like" evidence="1">
    <location>
        <begin position="4"/>
        <end position="184"/>
    </location>
</feature>
<feature type="binding site" evidence="1">
    <location>
        <begin position="11"/>
        <end position="18"/>
    </location>
    <ligand>
        <name>ATP</name>
        <dbReference type="ChEBI" id="CHEBI:30616"/>
    </ligand>
</feature>
<reference key="1">
    <citation type="journal article" date="2005" name="Proc. Natl. Acad. Sci. U.S.A.">
        <title>Complete genome sequence of Vibrio fischeri: a symbiotic bacterium with pathogenic congeners.</title>
        <authorList>
            <person name="Ruby E.G."/>
            <person name="Urbanowski M."/>
            <person name="Campbell J."/>
            <person name="Dunn A."/>
            <person name="Faini M."/>
            <person name="Gunsalus R."/>
            <person name="Lostroh P."/>
            <person name="Lupp C."/>
            <person name="McCann J."/>
            <person name="Millikan D."/>
            <person name="Schaefer A."/>
            <person name="Stabb E."/>
            <person name="Stevens A."/>
            <person name="Visick K."/>
            <person name="Whistler C."/>
            <person name="Greenberg E.P."/>
        </authorList>
    </citation>
    <scope>NUCLEOTIDE SEQUENCE [LARGE SCALE GENOMIC DNA]</scope>
    <source>
        <strain>ATCC 700601 / ES114</strain>
    </source>
</reference>
<sequence>MSKGTLYIVSAPSGAGKSSLISALLESNPTYAMKVSVSHTTRGMRPGETDGVHYHFIQKEHFEELIQKGEFLEYAEVFGNYYGTSRVWIEETLDKGIDVFLDIDWQGARQIREQMPLAKSVFILPPSNGELERRLNARGQDSDAVIAKRMSEAKSEISHYDEYDYVIINDDFDTAQMDFRSIIRAERLKQDKQTTKYKGMLEALLAD</sequence>
<comment type="function">
    <text evidence="1">Essential for recycling GMP and indirectly, cGMP.</text>
</comment>
<comment type="catalytic activity">
    <reaction evidence="1">
        <text>GMP + ATP = GDP + ADP</text>
        <dbReference type="Rhea" id="RHEA:20780"/>
        <dbReference type="ChEBI" id="CHEBI:30616"/>
        <dbReference type="ChEBI" id="CHEBI:58115"/>
        <dbReference type="ChEBI" id="CHEBI:58189"/>
        <dbReference type="ChEBI" id="CHEBI:456216"/>
        <dbReference type="EC" id="2.7.4.8"/>
    </reaction>
</comment>
<comment type="subcellular location">
    <subcellularLocation>
        <location evidence="1">Cytoplasm</location>
    </subcellularLocation>
</comment>
<comment type="similarity">
    <text evidence="1">Belongs to the guanylate kinase family.</text>
</comment>
<keyword id="KW-0067">ATP-binding</keyword>
<keyword id="KW-0963">Cytoplasm</keyword>
<keyword id="KW-0418">Kinase</keyword>
<keyword id="KW-0547">Nucleotide-binding</keyword>
<keyword id="KW-1185">Reference proteome</keyword>
<keyword id="KW-0808">Transferase</keyword>
<name>KGUA_ALIF1</name>
<dbReference type="EC" id="2.7.4.8" evidence="1"/>
<dbReference type="EMBL" id="CP000020">
    <property type="protein sequence ID" value="AAW84601.1"/>
    <property type="molecule type" value="Genomic_DNA"/>
</dbReference>
<dbReference type="RefSeq" id="WP_011260974.1">
    <property type="nucleotide sequence ID" value="NC_006840.2"/>
</dbReference>
<dbReference type="RefSeq" id="YP_203489.1">
    <property type="nucleotide sequence ID" value="NC_006840.2"/>
</dbReference>
<dbReference type="SMR" id="Q5E8P5"/>
<dbReference type="STRING" id="312309.VF_0106"/>
<dbReference type="EnsemblBacteria" id="AAW84601">
    <property type="protein sequence ID" value="AAW84601"/>
    <property type="gene ID" value="VF_0106"/>
</dbReference>
<dbReference type="GeneID" id="54162733"/>
<dbReference type="KEGG" id="vfi:VF_0106"/>
<dbReference type="PATRIC" id="fig|312309.11.peg.105"/>
<dbReference type="eggNOG" id="COG0194">
    <property type="taxonomic scope" value="Bacteria"/>
</dbReference>
<dbReference type="HOGENOM" id="CLU_001715_1_0_6"/>
<dbReference type="OrthoDB" id="9808150at2"/>
<dbReference type="Proteomes" id="UP000000537">
    <property type="component" value="Chromosome I"/>
</dbReference>
<dbReference type="GO" id="GO:0005829">
    <property type="term" value="C:cytosol"/>
    <property type="evidence" value="ECO:0007669"/>
    <property type="project" value="TreeGrafter"/>
</dbReference>
<dbReference type="GO" id="GO:0005524">
    <property type="term" value="F:ATP binding"/>
    <property type="evidence" value="ECO:0007669"/>
    <property type="project" value="UniProtKB-UniRule"/>
</dbReference>
<dbReference type="GO" id="GO:0004385">
    <property type="term" value="F:guanylate kinase activity"/>
    <property type="evidence" value="ECO:0007669"/>
    <property type="project" value="UniProtKB-UniRule"/>
</dbReference>
<dbReference type="CDD" id="cd00071">
    <property type="entry name" value="GMPK"/>
    <property type="match status" value="1"/>
</dbReference>
<dbReference type="FunFam" id="3.40.50.300:FF:000855">
    <property type="entry name" value="Guanylate kinase"/>
    <property type="match status" value="1"/>
</dbReference>
<dbReference type="FunFam" id="3.30.63.10:FF:000002">
    <property type="entry name" value="Guanylate kinase 1"/>
    <property type="match status" value="1"/>
</dbReference>
<dbReference type="Gene3D" id="3.30.63.10">
    <property type="entry name" value="Guanylate Kinase phosphate binding domain"/>
    <property type="match status" value="1"/>
</dbReference>
<dbReference type="Gene3D" id="3.40.50.300">
    <property type="entry name" value="P-loop containing nucleotide triphosphate hydrolases"/>
    <property type="match status" value="1"/>
</dbReference>
<dbReference type="HAMAP" id="MF_00328">
    <property type="entry name" value="Guanylate_kinase"/>
    <property type="match status" value="1"/>
</dbReference>
<dbReference type="InterPro" id="IPR008145">
    <property type="entry name" value="GK/Ca_channel_bsu"/>
</dbReference>
<dbReference type="InterPro" id="IPR008144">
    <property type="entry name" value="Guanylate_kin-like_dom"/>
</dbReference>
<dbReference type="InterPro" id="IPR017665">
    <property type="entry name" value="Guanylate_kinase"/>
</dbReference>
<dbReference type="InterPro" id="IPR020590">
    <property type="entry name" value="Guanylate_kinase_CS"/>
</dbReference>
<dbReference type="InterPro" id="IPR027417">
    <property type="entry name" value="P-loop_NTPase"/>
</dbReference>
<dbReference type="NCBIfam" id="TIGR03263">
    <property type="entry name" value="guanyl_kin"/>
    <property type="match status" value="1"/>
</dbReference>
<dbReference type="PANTHER" id="PTHR23117:SF13">
    <property type="entry name" value="GUANYLATE KINASE"/>
    <property type="match status" value="1"/>
</dbReference>
<dbReference type="PANTHER" id="PTHR23117">
    <property type="entry name" value="GUANYLATE KINASE-RELATED"/>
    <property type="match status" value="1"/>
</dbReference>
<dbReference type="Pfam" id="PF00625">
    <property type="entry name" value="Guanylate_kin"/>
    <property type="match status" value="1"/>
</dbReference>
<dbReference type="SMART" id="SM00072">
    <property type="entry name" value="GuKc"/>
    <property type="match status" value="1"/>
</dbReference>
<dbReference type="SUPFAM" id="SSF52540">
    <property type="entry name" value="P-loop containing nucleoside triphosphate hydrolases"/>
    <property type="match status" value="1"/>
</dbReference>
<dbReference type="PROSITE" id="PS00856">
    <property type="entry name" value="GUANYLATE_KINASE_1"/>
    <property type="match status" value="1"/>
</dbReference>
<dbReference type="PROSITE" id="PS50052">
    <property type="entry name" value="GUANYLATE_KINASE_2"/>
    <property type="match status" value="1"/>
</dbReference>
<protein>
    <recommendedName>
        <fullName evidence="1">Guanylate kinase</fullName>
        <ecNumber evidence="1">2.7.4.8</ecNumber>
    </recommendedName>
    <alternativeName>
        <fullName evidence="1">GMP kinase</fullName>
    </alternativeName>
</protein>
<gene>
    <name evidence="1" type="primary">gmk</name>
    <name type="ordered locus">VF_0106</name>
</gene>